<sequence length="185" mass="20615">MIADIKKDAQERMGKCVEATKNQMAKVRTGRAHPSLLDSIQVSYYGTMTPLNQVANVGIEDARTLSVTVFDRSAIQAVEKAIMSSDLGLNPMSAGATLRIPLPALTEERRKDFIKVVRAEAEGGRVAIRNVRRDAISDVKKLEKAKECTEDDVRRFEDEVQKFTDAHIKKVDEILAAKEIELMEV</sequence>
<accession>Q0HGV8</accession>
<name>RRF_SHESM</name>
<organism>
    <name type="scientific">Shewanella sp. (strain MR-4)</name>
    <dbReference type="NCBI Taxonomy" id="60480"/>
    <lineage>
        <taxon>Bacteria</taxon>
        <taxon>Pseudomonadati</taxon>
        <taxon>Pseudomonadota</taxon>
        <taxon>Gammaproteobacteria</taxon>
        <taxon>Alteromonadales</taxon>
        <taxon>Shewanellaceae</taxon>
        <taxon>Shewanella</taxon>
    </lineage>
</organism>
<keyword id="KW-0963">Cytoplasm</keyword>
<keyword id="KW-0648">Protein biosynthesis</keyword>
<feature type="chain" id="PRO_1000003263" description="Ribosome-recycling factor">
    <location>
        <begin position="1"/>
        <end position="185"/>
    </location>
</feature>
<comment type="function">
    <text evidence="1">Responsible for the release of ribosomes from messenger RNA at the termination of protein biosynthesis. May increase the efficiency of translation by recycling ribosomes from one round of translation to another.</text>
</comment>
<comment type="subcellular location">
    <subcellularLocation>
        <location evidence="1">Cytoplasm</location>
    </subcellularLocation>
</comment>
<comment type="similarity">
    <text evidence="1">Belongs to the RRF family.</text>
</comment>
<reference key="1">
    <citation type="submission" date="2006-08" db="EMBL/GenBank/DDBJ databases">
        <title>Complete sequence of Shewanella sp. MR-4.</title>
        <authorList>
            <consortium name="US DOE Joint Genome Institute"/>
            <person name="Copeland A."/>
            <person name="Lucas S."/>
            <person name="Lapidus A."/>
            <person name="Barry K."/>
            <person name="Detter J.C."/>
            <person name="Glavina del Rio T."/>
            <person name="Hammon N."/>
            <person name="Israni S."/>
            <person name="Dalin E."/>
            <person name="Tice H."/>
            <person name="Pitluck S."/>
            <person name="Kiss H."/>
            <person name="Brettin T."/>
            <person name="Bruce D."/>
            <person name="Han C."/>
            <person name="Tapia R."/>
            <person name="Gilna P."/>
            <person name="Schmutz J."/>
            <person name="Larimer F."/>
            <person name="Land M."/>
            <person name="Hauser L."/>
            <person name="Kyrpides N."/>
            <person name="Mikhailova N."/>
            <person name="Nealson K."/>
            <person name="Konstantinidis K."/>
            <person name="Klappenbach J."/>
            <person name="Tiedje J."/>
            <person name="Richardson P."/>
        </authorList>
    </citation>
    <scope>NUCLEOTIDE SEQUENCE [LARGE SCALE GENOMIC DNA]</scope>
    <source>
        <strain>MR-4</strain>
    </source>
</reference>
<evidence type="ECO:0000255" key="1">
    <source>
        <dbReference type="HAMAP-Rule" id="MF_00040"/>
    </source>
</evidence>
<protein>
    <recommendedName>
        <fullName evidence="1">Ribosome-recycling factor</fullName>
        <shortName evidence="1">RRF</shortName>
    </recommendedName>
    <alternativeName>
        <fullName evidence="1">Ribosome-releasing factor</fullName>
    </alternativeName>
</protein>
<proteinExistence type="inferred from homology"/>
<gene>
    <name evidence="1" type="primary">frr</name>
    <name type="ordered locus">Shewmr4_2638</name>
</gene>
<dbReference type="EMBL" id="CP000446">
    <property type="protein sequence ID" value="ABI39709.1"/>
    <property type="molecule type" value="Genomic_DNA"/>
</dbReference>
<dbReference type="RefSeq" id="WP_011623390.1">
    <property type="nucleotide sequence ID" value="NC_008321.1"/>
</dbReference>
<dbReference type="SMR" id="Q0HGV8"/>
<dbReference type="KEGG" id="she:Shewmr4_2638"/>
<dbReference type="HOGENOM" id="CLU_073981_2_1_6"/>
<dbReference type="GO" id="GO:0005829">
    <property type="term" value="C:cytosol"/>
    <property type="evidence" value="ECO:0007669"/>
    <property type="project" value="GOC"/>
</dbReference>
<dbReference type="GO" id="GO:0043023">
    <property type="term" value="F:ribosomal large subunit binding"/>
    <property type="evidence" value="ECO:0007669"/>
    <property type="project" value="TreeGrafter"/>
</dbReference>
<dbReference type="GO" id="GO:0002184">
    <property type="term" value="P:cytoplasmic translational termination"/>
    <property type="evidence" value="ECO:0007669"/>
    <property type="project" value="TreeGrafter"/>
</dbReference>
<dbReference type="CDD" id="cd00520">
    <property type="entry name" value="RRF"/>
    <property type="match status" value="1"/>
</dbReference>
<dbReference type="FunFam" id="1.10.132.20:FF:000001">
    <property type="entry name" value="Ribosome-recycling factor"/>
    <property type="match status" value="1"/>
</dbReference>
<dbReference type="FunFam" id="3.30.1360.40:FF:000001">
    <property type="entry name" value="Ribosome-recycling factor"/>
    <property type="match status" value="1"/>
</dbReference>
<dbReference type="Gene3D" id="3.30.1360.40">
    <property type="match status" value="1"/>
</dbReference>
<dbReference type="Gene3D" id="1.10.132.20">
    <property type="entry name" value="Ribosome-recycling factor"/>
    <property type="match status" value="1"/>
</dbReference>
<dbReference type="HAMAP" id="MF_00040">
    <property type="entry name" value="RRF"/>
    <property type="match status" value="1"/>
</dbReference>
<dbReference type="InterPro" id="IPR002661">
    <property type="entry name" value="Ribosome_recyc_fac"/>
</dbReference>
<dbReference type="InterPro" id="IPR023584">
    <property type="entry name" value="Ribosome_recyc_fac_dom"/>
</dbReference>
<dbReference type="InterPro" id="IPR036191">
    <property type="entry name" value="RRF_sf"/>
</dbReference>
<dbReference type="NCBIfam" id="TIGR00496">
    <property type="entry name" value="frr"/>
    <property type="match status" value="1"/>
</dbReference>
<dbReference type="PANTHER" id="PTHR20982:SF3">
    <property type="entry name" value="MITOCHONDRIAL RIBOSOME RECYCLING FACTOR PSEUDO 1"/>
    <property type="match status" value="1"/>
</dbReference>
<dbReference type="PANTHER" id="PTHR20982">
    <property type="entry name" value="RIBOSOME RECYCLING FACTOR"/>
    <property type="match status" value="1"/>
</dbReference>
<dbReference type="Pfam" id="PF01765">
    <property type="entry name" value="RRF"/>
    <property type="match status" value="1"/>
</dbReference>
<dbReference type="SUPFAM" id="SSF55194">
    <property type="entry name" value="Ribosome recycling factor, RRF"/>
    <property type="match status" value="1"/>
</dbReference>